<accession>Q73WU1</accession>
<feature type="chain" id="PRO_0000420164" description="Glucosyl-3-phosphoglycerate synthase">
    <location>
        <begin position="1"/>
        <end position="329"/>
    </location>
</feature>
<feature type="binding site" evidence="2 9">
    <location>
        <begin position="55"/>
        <end position="59"/>
    </location>
    <ligand>
        <name>UDP-alpha-D-glucose</name>
        <dbReference type="ChEBI" id="CHEBI:58885"/>
    </ligand>
</feature>
<feature type="binding site" evidence="2 9">
    <location>
        <position position="86"/>
    </location>
    <ligand>
        <name>UDP-alpha-D-glucose</name>
        <dbReference type="ChEBI" id="CHEBI:58885"/>
    </ligand>
</feature>
<feature type="binding site" evidence="2 9">
    <location>
        <position position="119"/>
    </location>
    <ligand>
        <name>UDP-alpha-D-glucose</name>
        <dbReference type="ChEBI" id="CHEBI:58885"/>
    </ligand>
</feature>
<feature type="binding site" evidence="2 9">
    <location>
        <begin position="139"/>
        <end position="141"/>
    </location>
    <ligand>
        <name>UDP-alpha-D-glucose</name>
        <dbReference type="ChEBI" id="CHEBI:58885"/>
    </ligand>
</feature>
<feature type="binding site" evidence="2 7 9">
    <location>
        <position position="141"/>
    </location>
    <ligand>
        <name>Mn(2+)</name>
        <dbReference type="ChEBI" id="CHEBI:29035"/>
    </ligand>
</feature>
<feature type="binding site" evidence="5 6">
    <location>
        <begin position="189"/>
        <end position="192"/>
    </location>
    <ligand>
        <name>(2R)-3-phosphoglycerate</name>
        <dbReference type="ChEBI" id="CHEBI:58272"/>
    </ligand>
</feature>
<feature type="binding site" evidence="2 9">
    <location>
        <begin position="234"/>
        <end position="237"/>
    </location>
    <ligand>
        <name>UDP-alpha-D-glucose</name>
        <dbReference type="ChEBI" id="CHEBI:58885"/>
    </ligand>
</feature>
<feature type="binding site" evidence="2 7 9">
    <location>
        <position position="263"/>
    </location>
    <ligand>
        <name>Mn(2+)</name>
        <dbReference type="ChEBI" id="CHEBI:29035"/>
    </ligand>
</feature>
<feature type="binding site" evidence="1">
    <location>
        <position position="265"/>
    </location>
    <ligand>
        <name>(2R)-3-phosphoglycerate</name>
        <dbReference type="ChEBI" id="CHEBI:58272"/>
    </ligand>
</feature>
<feature type="strand" evidence="12">
    <location>
        <begin position="24"/>
        <end position="26"/>
    </location>
</feature>
<feature type="turn" evidence="12">
    <location>
        <begin position="27"/>
        <end position="29"/>
    </location>
</feature>
<feature type="strand" evidence="12">
    <location>
        <begin position="30"/>
        <end position="32"/>
    </location>
</feature>
<feature type="helix" evidence="11">
    <location>
        <begin position="38"/>
        <end position="43"/>
    </location>
</feature>
<feature type="turn" evidence="11">
    <location>
        <begin position="44"/>
        <end position="47"/>
    </location>
</feature>
<feature type="strand" evidence="11">
    <location>
        <begin position="50"/>
        <end position="58"/>
    </location>
</feature>
<feature type="turn" evidence="11">
    <location>
        <begin position="60"/>
        <end position="62"/>
    </location>
</feature>
<feature type="helix" evidence="11">
    <location>
        <begin position="63"/>
        <end position="70"/>
    </location>
</feature>
<feature type="helix" evidence="11">
    <location>
        <begin position="71"/>
        <end position="73"/>
    </location>
</feature>
<feature type="turn" evidence="11">
    <location>
        <begin position="75"/>
        <end position="77"/>
    </location>
</feature>
<feature type="strand" evidence="11">
    <location>
        <begin position="78"/>
        <end position="85"/>
    </location>
</feature>
<feature type="helix" evidence="11">
    <location>
        <begin position="92"/>
        <end position="98"/>
    </location>
</feature>
<feature type="strand" evidence="11">
    <location>
        <begin position="102"/>
        <end position="105"/>
    </location>
</feature>
<feature type="helix" evidence="11">
    <location>
        <begin position="106"/>
        <end position="109"/>
    </location>
</feature>
<feature type="helix" evidence="11">
    <location>
        <begin position="119"/>
        <end position="129"/>
    </location>
</feature>
<feature type="strand" evidence="11">
    <location>
        <begin position="133"/>
        <end position="137"/>
    </location>
</feature>
<feature type="strand" evidence="11">
    <location>
        <begin position="142"/>
        <end position="144"/>
    </location>
</feature>
<feature type="helix" evidence="11">
    <location>
        <begin position="149"/>
        <end position="158"/>
    </location>
</feature>
<feature type="strand" evidence="12">
    <location>
        <begin position="159"/>
        <end position="162"/>
    </location>
</feature>
<feature type="strand" evidence="11">
    <location>
        <begin position="165"/>
        <end position="171"/>
    </location>
</feature>
<feature type="helix" evidence="11">
    <location>
        <begin position="190"/>
        <end position="194"/>
    </location>
</feature>
<feature type="helix" evidence="11">
    <location>
        <begin position="196"/>
        <end position="203"/>
    </location>
</feature>
<feature type="helix" evidence="11">
    <location>
        <begin position="205"/>
        <end position="209"/>
    </location>
</feature>
<feature type="strand" evidence="11">
    <location>
        <begin position="218"/>
        <end position="221"/>
    </location>
</feature>
<feature type="helix" evidence="11">
    <location>
        <begin position="222"/>
        <end position="225"/>
    </location>
</feature>
<feature type="helix" evidence="11">
    <location>
        <begin position="233"/>
        <end position="235"/>
    </location>
</feature>
<feature type="helix" evidence="11">
    <location>
        <begin position="236"/>
        <end position="248"/>
    </location>
</feature>
<feature type="helix" evidence="11">
    <location>
        <begin position="250"/>
        <end position="252"/>
    </location>
</feature>
<feature type="strand" evidence="11">
    <location>
        <begin position="253"/>
        <end position="260"/>
    </location>
</feature>
<feature type="helix" evidence="11">
    <location>
        <begin position="268"/>
        <end position="270"/>
    </location>
</feature>
<feature type="helix" evidence="11">
    <location>
        <begin position="271"/>
        <end position="285"/>
    </location>
</feature>
<feature type="strand" evidence="11">
    <location>
        <begin position="296"/>
        <end position="302"/>
    </location>
</feature>
<feature type="strand" evidence="11">
    <location>
        <begin position="308"/>
        <end position="312"/>
    </location>
</feature>
<feature type="helix" evidence="11">
    <location>
        <begin position="323"/>
        <end position="325"/>
    </location>
</feature>
<organism>
    <name type="scientific">Mycolicibacterium paratuberculosis (strain ATCC BAA-968 / K-10)</name>
    <name type="common">Mycobacterium paratuberculosis</name>
    <dbReference type="NCBI Taxonomy" id="262316"/>
    <lineage>
        <taxon>Bacteria</taxon>
        <taxon>Bacillati</taxon>
        <taxon>Actinomycetota</taxon>
        <taxon>Actinomycetes</taxon>
        <taxon>Mycobacteriales</taxon>
        <taxon>Mycobacteriaceae</taxon>
        <taxon>Mycobacterium</taxon>
        <taxon>Mycobacterium avium complex (MAC)</taxon>
    </lineage>
</organism>
<keyword id="KW-0002">3D-structure</keyword>
<keyword id="KW-0328">Glycosyltransferase</keyword>
<keyword id="KW-0460">Magnesium</keyword>
<keyword id="KW-0464">Manganese</keyword>
<keyword id="KW-0479">Metal-binding</keyword>
<keyword id="KW-1185">Reference proteome</keyword>
<keyword id="KW-0808">Transferase</keyword>
<protein>
    <recommendedName>
        <fullName evidence="3">Glucosyl-3-phosphoglycerate synthase</fullName>
        <shortName evidence="4">GpgS</shortName>
        <ecNumber evidence="2">2.4.1.266</ecNumber>
    </recommendedName>
</protein>
<dbReference type="EC" id="2.4.1.266" evidence="2"/>
<dbReference type="EMBL" id="AE016958">
    <property type="protein sequence ID" value="AAS04886.1"/>
    <property type="molecule type" value="Genomic_DNA"/>
</dbReference>
<dbReference type="RefSeq" id="WP_003878473.1">
    <property type="nucleotide sequence ID" value="NC_002944.2"/>
</dbReference>
<dbReference type="PDB" id="3CKJ">
    <property type="method" value="X-ray"/>
    <property type="resolution" value="1.80 A"/>
    <property type="chains" value="A=1-329"/>
</dbReference>
<dbReference type="PDB" id="3CKN">
    <property type="method" value="X-ray"/>
    <property type="resolution" value="2.20 A"/>
    <property type="chains" value="A=1-329"/>
</dbReference>
<dbReference type="PDB" id="3CKO">
    <property type="method" value="X-ray"/>
    <property type="resolution" value="2.50 A"/>
    <property type="chains" value="A=1-329"/>
</dbReference>
<dbReference type="PDB" id="3CKQ">
    <property type="method" value="X-ray"/>
    <property type="resolution" value="3.00 A"/>
    <property type="chains" value="A=1-329"/>
</dbReference>
<dbReference type="PDB" id="3CKV">
    <property type="method" value="X-ray"/>
    <property type="resolution" value="2.00 A"/>
    <property type="chains" value="A=1-329"/>
</dbReference>
<dbReference type="PDBsum" id="3CKJ"/>
<dbReference type="PDBsum" id="3CKN"/>
<dbReference type="PDBsum" id="3CKO"/>
<dbReference type="PDBsum" id="3CKQ"/>
<dbReference type="PDBsum" id="3CKV"/>
<dbReference type="SMR" id="Q73WU1"/>
<dbReference type="STRING" id="262316.MAP_2569c"/>
<dbReference type="CAZy" id="GT81">
    <property type="family name" value="Glycosyltransferase Family 81"/>
</dbReference>
<dbReference type="KEGG" id="mpa:MAP_2569c"/>
<dbReference type="eggNOG" id="COG0463">
    <property type="taxonomic scope" value="Bacteria"/>
</dbReference>
<dbReference type="HOGENOM" id="CLU_053119_0_0_11"/>
<dbReference type="EvolutionaryTrace" id="Q73WU1"/>
<dbReference type="Proteomes" id="UP000000580">
    <property type="component" value="Chromosome"/>
</dbReference>
<dbReference type="GO" id="GO:0016757">
    <property type="term" value="F:glycosyltransferase activity"/>
    <property type="evidence" value="ECO:0007669"/>
    <property type="project" value="UniProtKB-KW"/>
</dbReference>
<dbReference type="GO" id="GO:0046872">
    <property type="term" value="F:metal ion binding"/>
    <property type="evidence" value="ECO:0007669"/>
    <property type="project" value="UniProtKB-KW"/>
</dbReference>
<dbReference type="CDD" id="cd00761">
    <property type="entry name" value="Glyco_tranf_GTA_type"/>
    <property type="match status" value="1"/>
</dbReference>
<dbReference type="Gene3D" id="3.90.550.10">
    <property type="entry name" value="Spore Coat Polysaccharide Biosynthesis Protein SpsA, Chain A"/>
    <property type="match status" value="1"/>
</dbReference>
<dbReference type="InterPro" id="IPR001173">
    <property type="entry name" value="Glyco_trans_2-like"/>
</dbReference>
<dbReference type="InterPro" id="IPR050256">
    <property type="entry name" value="Glycosyltransferase_2"/>
</dbReference>
<dbReference type="InterPro" id="IPR029044">
    <property type="entry name" value="Nucleotide-diphossugar_trans"/>
</dbReference>
<dbReference type="NCBIfam" id="NF010496">
    <property type="entry name" value="PRK13915.1"/>
    <property type="match status" value="1"/>
</dbReference>
<dbReference type="PANTHER" id="PTHR48090:SF10">
    <property type="entry name" value="GLUCOSYL-3-PHOSPHOGLYCERATE SYNTHASE"/>
    <property type="match status" value="1"/>
</dbReference>
<dbReference type="PANTHER" id="PTHR48090">
    <property type="entry name" value="UNDECAPRENYL-PHOSPHATE 4-DEOXY-4-FORMAMIDO-L-ARABINOSE TRANSFERASE-RELATED"/>
    <property type="match status" value="1"/>
</dbReference>
<dbReference type="Pfam" id="PF00535">
    <property type="entry name" value="Glycos_transf_2"/>
    <property type="match status" value="1"/>
</dbReference>
<dbReference type="SUPFAM" id="SSF53448">
    <property type="entry name" value="Nucleotide-diphospho-sugar transferases"/>
    <property type="match status" value="1"/>
</dbReference>
<name>GPGS_MYCPA</name>
<reference key="1">
    <citation type="journal article" date="2005" name="Proc. Natl. Acad. Sci. U.S.A.">
        <title>The complete genome sequence of Mycobacterium avium subspecies paratuberculosis.</title>
        <authorList>
            <person name="Li L."/>
            <person name="Bannantine J.P."/>
            <person name="Zhang Q."/>
            <person name="Amonsin A."/>
            <person name="May B.J."/>
            <person name="Alt D."/>
            <person name="Banerji N."/>
            <person name="Kanjilal S."/>
            <person name="Kapur V."/>
        </authorList>
    </citation>
    <scope>NUCLEOTIDE SEQUENCE [LARGE SCALE GENOMIC DNA]</scope>
    <source>
        <strain>ATCC BAA-968 / K-10</strain>
    </source>
</reference>
<reference evidence="6 7 8 9 10" key="2">
    <citation type="journal article" date="2008" name="J. Biol. Chem.">
        <title>Crystal structure of a UDP-glucose-specific glycosyltransferase from a Mycobacterium species.</title>
        <authorList>
            <person name="Fulton Z."/>
            <person name="McAlister A."/>
            <person name="Wilce M.C."/>
            <person name="Brammananth R."/>
            <person name="Zaker-Tabrizi L."/>
            <person name="Perugini M.A."/>
            <person name="Bottomley S.P."/>
            <person name="Coppel R.L."/>
            <person name="Crellin P.K."/>
            <person name="Rossjohn J."/>
            <person name="Beddoe T."/>
        </authorList>
    </citation>
    <scope>X-RAY CRYSTALLOGRAPHY (1.80 ANGSTROMS) IN COMPLEXES WITH UDP AND UDP-ALPHA-D-GLUCOSE AND MANGANESE ION</scope>
    <scope>FUNCTION</scope>
    <scope>CATALYTIC ACTIVITY</scope>
    <scope>SUBSTRATE SPECIFICITY</scope>
    <scope>COFACTOR</scope>
    <scope>SUBUNIT</scope>
</reference>
<sequence>MTTSDLVAGELAGDGLRDTRPGDTWLADRSWNRPGWTVAELEAAKAGRTISVVLPALDEEDTIGSVIDSISPLVDGLVDELIVLDSGSTDDTEIRAVAAGARVVSREQALPEVPIRPGKGEALWRSLAASRGDIVVFVDSDLINPHPMFVPWLVGPLLTGDGVHLVKSFYRRPLNVGDAGGGAGATGGGRVTELVARPLLAALRPELGCILQPLGGEYAATRELLTSVPFAPGYGVEIGLLVDTFDRLGLDAIAQVNLGVREHRNRPLAELGAMSRQVIATLLSRCGIPDSGVGLTQFVADGPEGQSYTQHTWPVSLADRPPMQAIRPR</sequence>
<comment type="function">
    <text evidence="2">Involved in the biosynthesis of 6-O-methylglucose lipopolysaccarides (MGLPs). Catalyzes the transfer of the glucose moiety from UDP-alpha-D-glucose (UDP-Glc) to the position 2 of 3-phospho-D-glycerate (3-PGA) to form glucosyl-3-phosphoglycerate (GPG). To a lesser extent can also use GDP-Glc but not UDP-Gal or UDP-GlcNAc as the sugar donor.</text>
</comment>
<comment type="catalytic activity">
    <reaction evidence="2">
        <text>an NDP-alpha-D-glucose + (2R)-3-phosphoglycerate = (2R)-2-O-(alpha-D-glucopyranosyl)-3-phospho-glycerate + a ribonucleoside 5'-diphosphate + H(+)</text>
        <dbReference type="Rhea" id="RHEA:47244"/>
        <dbReference type="ChEBI" id="CHEBI:15378"/>
        <dbReference type="ChEBI" id="CHEBI:57930"/>
        <dbReference type="ChEBI" id="CHEBI:58272"/>
        <dbReference type="ChEBI" id="CHEBI:62600"/>
        <dbReference type="ChEBI" id="CHEBI:76533"/>
        <dbReference type="EC" id="2.4.1.266"/>
    </reaction>
    <physiologicalReaction direction="left-to-right" evidence="5">
        <dbReference type="Rhea" id="RHEA:47245"/>
    </physiologicalReaction>
</comment>
<comment type="catalytic activity">
    <reaction evidence="2">
        <text>(2R)-3-phosphoglycerate + UDP-alpha-D-glucose = (2R)-2-O-(alpha-D-glucopyranosyl)-3-phospho-glycerate + UDP + H(+)</text>
        <dbReference type="Rhea" id="RHEA:31319"/>
        <dbReference type="ChEBI" id="CHEBI:15378"/>
        <dbReference type="ChEBI" id="CHEBI:58223"/>
        <dbReference type="ChEBI" id="CHEBI:58272"/>
        <dbReference type="ChEBI" id="CHEBI:58885"/>
        <dbReference type="ChEBI" id="CHEBI:62600"/>
        <dbReference type="EC" id="2.4.1.266"/>
    </reaction>
    <physiologicalReaction direction="left-to-right" evidence="5">
        <dbReference type="Rhea" id="RHEA:31320"/>
    </physiologicalReaction>
</comment>
<comment type="catalytic activity">
    <reaction evidence="2">
        <text>GDP-D-glucose + (2R)-3-phosphoglycerate = (2R)-2-O-(alpha-D-glucopyranosyl)-3-phospho-glycerate + GDP + H(+)</text>
        <dbReference type="Rhea" id="RHEA:31315"/>
        <dbReference type="ChEBI" id="CHEBI:15378"/>
        <dbReference type="ChEBI" id="CHEBI:58127"/>
        <dbReference type="ChEBI" id="CHEBI:58189"/>
        <dbReference type="ChEBI" id="CHEBI:58272"/>
        <dbReference type="ChEBI" id="CHEBI:62600"/>
        <dbReference type="EC" id="2.4.1.266"/>
    </reaction>
    <physiologicalReaction direction="left-to-right" evidence="5">
        <dbReference type="Rhea" id="RHEA:31316"/>
    </physiologicalReaction>
</comment>
<comment type="cofactor">
    <cofactor evidence="5">
        <name>Mg(2+)</name>
        <dbReference type="ChEBI" id="CHEBI:18420"/>
    </cofactor>
    <cofactor evidence="5">
        <name>Mn(2+)</name>
        <dbReference type="ChEBI" id="CHEBI:29035"/>
    </cofactor>
</comment>
<comment type="subunit">
    <text evidence="2">Homodimer.</text>
</comment>
<comment type="similarity">
    <text evidence="4">Belongs to the glycosyltransferase 2 family.</text>
</comment>
<evidence type="ECO:0000250" key="1">
    <source>
        <dbReference type="UniProtKB" id="P9WMW9"/>
    </source>
</evidence>
<evidence type="ECO:0000269" key="2">
    <source>
    </source>
</evidence>
<evidence type="ECO:0000303" key="3">
    <source>
    </source>
</evidence>
<evidence type="ECO:0000305" key="4"/>
<evidence type="ECO:0000305" key="5">
    <source>
    </source>
</evidence>
<evidence type="ECO:0007744" key="6">
    <source>
        <dbReference type="PDB" id="3CKJ"/>
    </source>
</evidence>
<evidence type="ECO:0007744" key="7">
    <source>
        <dbReference type="PDB" id="3CKN"/>
    </source>
</evidence>
<evidence type="ECO:0007744" key="8">
    <source>
        <dbReference type="PDB" id="3CKO"/>
    </source>
</evidence>
<evidence type="ECO:0007744" key="9">
    <source>
        <dbReference type="PDB" id="3CKQ"/>
    </source>
</evidence>
<evidence type="ECO:0007744" key="10">
    <source>
        <dbReference type="PDB" id="3CKV"/>
    </source>
</evidence>
<evidence type="ECO:0007829" key="11">
    <source>
        <dbReference type="PDB" id="3CKJ"/>
    </source>
</evidence>
<evidence type="ECO:0007829" key="12">
    <source>
        <dbReference type="PDB" id="3CKQ"/>
    </source>
</evidence>
<gene>
    <name type="ordered locus">MAP_2569c</name>
</gene>
<proteinExistence type="evidence at protein level"/>